<gene>
    <name evidence="7" type="primary">hmit-1.1</name>
    <name evidence="7" type="ORF">Y51A2D.4</name>
</gene>
<proteinExistence type="evidence at transcript level"/>
<feature type="chain" id="PRO_0000450211" description="Proton myo-inositol cotransporter hmit-1.1">
    <location>
        <begin position="1"/>
        <end position="606"/>
    </location>
</feature>
<feature type="topological domain" description="Cytoplasmic" evidence="5">
    <location>
        <begin position="1"/>
        <end position="20"/>
    </location>
</feature>
<feature type="transmembrane region" description="Helical; Name=1" evidence="2">
    <location>
        <begin position="21"/>
        <end position="41"/>
    </location>
</feature>
<feature type="topological domain" description="Extracellular" evidence="5">
    <location>
        <begin position="42"/>
        <end position="63"/>
    </location>
</feature>
<feature type="transmembrane region" description="Helical; Name=2" evidence="2">
    <location>
        <begin position="64"/>
        <end position="84"/>
    </location>
</feature>
<feature type="topological domain" description="Cytoplasmic" evidence="5">
    <location>
        <begin position="85"/>
        <end position="96"/>
    </location>
</feature>
<feature type="transmembrane region" description="Helical; Name=3" evidence="2">
    <location>
        <begin position="97"/>
        <end position="117"/>
    </location>
</feature>
<feature type="topological domain" description="Extracellular" evidence="5">
    <location>
        <position position="118"/>
    </location>
</feature>
<feature type="transmembrane region" description="Helical; Name=4" evidence="2">
    <location>
        <begin position="119"/>
        <end position="139"/>
    </location>
</feature>
<feature type="topological domain" description="Cytoplasmic" evidence="5">
    <location>
        <begin position="140"/>
        <end position="152"/>
    </location>
</feature>
<feature type="transmembrane region" description="Helical; Name=5" evidence="2">
    <location>
        <begin position="153"/>
        <end position="173"/>
    </location>
</feature>
<feature type="topological domain" description="Extracellular" evidence="5">
    <location>
        <begin position="174"/>
        <end position="188"/>
    </location>
</feature>
<feature type="transmembrane region" description="Helical; Name=6" evidence="2">
    <location>
        <begin position="189"/>
        <end position="209"/>
    </location>
</feature>
<feature type="topological domain" description="Cytoplasmic" evidence="5">
    <location>
        <begin position="210"/>
        <end position="278"/>
    </location>
</feature>
<feature type="transmembrane region" description="Helical; Name=7" evidence="2">
    <location>
        <begin position="279"/>
        <end position="299"/>
    </location>
</feature>
<feature type="topological domain" description="Extracellular" evidence="5">
    <location>
        <begin position="300"/>
        <end position="317"/>
    </location>
</feature>
<feature type="transmembrane region" description="Helical; Name=8" evidence="2">
    <location>
        <begin position="318"/>
        <end position="338"/>
    </location>
</feature>
<feature type="topological domain" description="Cytoplasmic" evidence="5">
    <location>
        <begin position="339"/>
        <end position="345"/>
    </location>
</feature>
<feature type="transmembrane region" description="Helical; Name=9" evidence="2">
    <location>
        <begin position="346"/>
        <end position="366"/>
    </location>
</feature>
<feature type="topological domain" description="Extracellular" evidence="5">
    <location>
        <begin position="367"/>
        <end position="464"/>
    </location>
</feature>
<feature type="transmembrane region" description="Helical; Name=10" evidence="2">
    <location>
        <begin position="465"/>
        <end position="485"/>
    </location>
</feature>
<feature type="topological domain" description="Cytoplasmic" evidence="5">
    <location>
        <begin position="486"/>
        <end position="501"/>
    </location>
</feature>
<feature type="transmembrane region" description="Helical; Name=11" evidence="2">
    <location>
        <begin position="502"/>
        <end position="522"/>
    </location>
</feature>
<feature type="topological domain" description="Extracellular" evidence="5">
    <location>
        <begin position="523"/>
        <end position="531"/>
    </location>
</feature>
<feature type="transmembrane region" description="Helical; Name=12" evidence="2">
    <location>
        <begin position="532"/>
        <end position="552"/>
    </location>
</feature>
<feature type="topological domain" description="Cytoplasmic" evidence="5">
    <location>
        <begin position="553"/>
        <end position="606"/>
    </location>
</feature>
<feature type="glycosylation site" description="N-linked (GlcNAc...) asparagine" evidence="3">
    <location>
        <position position="314"/>
    </location>
</feature>
<feature type="glycosylation site" description="N-linked (GlcNAc...) asparagine" evidence="3">
    <location>
        <position position="387"/>
    </location>
</feature>
<feature type="glycosylation site" description="N-linked (GlcNAc...) asparagine" evidence="3">
    <location>
        <position position="445"/>
    </location>
</feature>
<evidence type="ECO:0000250" key="1">
    <source>
        <dbReference type="UniProtKB" id="Q96QE2"/>
    </source>
</evidence>
<evidence type="ECO:0000255" key="2"/>
<evidence type="ECO:0000255" key="3">
    <source>
        <dbReference type="PROSITE-ProRule" id="PRU00498"/>
    </source>
</evidence>
<evidence type="ECO:0000269" key="4">
    <source>
    </source>
</evidence>
<evidence type="ECO:0000305" key="5"/>
<evidence type="ECO:0000312" key="6">
    <source>
        <dbReference type="Proteomes" id="UP000001940"/>
    </source>
</evidence>
<evidence type="ECO:0000312" key="7">
    <source>
        <dbReference type="WormBase" id="Y51A2D.4"/>
    </source>
</evidence>
<name>HMT11_CAEEL</name>
<organism evidence="6">
    <name type="scientific">Caenorhabditis elegans</name>
    <dbReference type="NCBI Taxonomy" id="6239"/>
    <lineage>
        <taxon>Eukaryota</taxon>
        <taxon>Metazoa</taxon>
        <taxon>Ecdysozoa</taxon>
        <taxon>Nematoda</taxon>
        <taxon>Chromadorea</taxon>
        <taxon>Rhabditida</taxon>
        <taxon>Rhabditina</taxon>
        <taxon>Rhabditomorpha</taxon>
        <taxon>Rhabditoidea</taxon>
        <taxon>Rhabditidae</taxon>
        <taxon>Peloderinae</taxon>
        <taxon>Caenorhabditis</taxon>
    </lineage>
</organism>
<dbReference type="EMBL" id="BX284605">
    <property type="protein sequence ID" value="CAA16400.1"/>
    <property type="molecule type" value="Genomic_DNA"/>
</dbReference>
<dbReference type="PIR" id="T27072">
    <property type="entry name" value="T27072"/>
</dbReference>
<dbReference type="RefSeq" id="NP_507623.1">
    <property type="nucleotide sequence ID" value="NM_075222.5"/>
</dbReference>
<dbReference type="SMR" id="Q9XXR3"/>
<dbReference type="FunCoup" id="Q9XXR3">
    <property type="interactions" value="633"/>
</dbReference>
<dbReference type="IntAct" id="Q9XXR3">
    <property type="interactions" value="1"/>
</dbReference>
<dbReference type="STRING" id="6239.Y51A2D.4.1"/>
<dbReference type="GlyCosmos" id="Q9XXR3">
    <property type="glycosylation" value="3 sites, No reported glycans"/>
</dbReference>
<dbReference type="PaxDb" id="6239-Y51A2D.4"/>
<dbReference type="EnsemblMetazoa" id="Y51A2D.4.1">
    <property type="protein sequence ID" value="Y51A2D.4.1"/>
    <property type="gene ID" value="WBGene00013073"/>
</dbReference>
<dbReference type="GeneID" id="180205"/>
<dbReference type="KEGG" id="cel:CELE_Y51A2D.4"/>
<dbReference type="UCSC" id="Y51A2D.4">
    <property type="organism name" value="c. elegans"/>
</dbReference>
<dbReference type="AGR" id="WB:WBGene00013073"/>
<dbReference type="CTD" id="180205"/>
<dbReference type="WormBase" id="Y51A2D.4">
    <property type="protein sequence ID" value="CE19201"/>
    <property type="gene ID" value="WBGene00013073"/>
    <property type="gene designation" value="hmit-1.1"/>
</dbReference>
<dbReference type="eggNOG" id="KOG0254">
    <property type="taxonomic scope" value="Eukaryota"/>
</dbReference>
<dbReference type="HOGENOM" id="CLU_001265_30_5_1"/>
<dbReference type="InParanoid" id="Q9XXR3"/>
<dbReference type="OMA" id="FCHDANT"/>
<dbReference type="OrthoDB" id="6339427at2759"/>
<dbReference type="PhylomeDB" id="Q9XXR3"/>
<dbReference type="PRO" id="PR:Q9XXR3"/>
<dbReference type="Proteomes" id="UP000001940">
    <property type="component" value="Chromosome V"/>
</dbReference>
<dbReference type="Bgee" id="WBGene00013073">
    <property type="expression patterns" value="Expressed in larva and 2 other cell types or tissues"/>
</dbReference>
<dbReference type="GO" id="GO:0016324">
    <property type="term" value="C:apical plasma membrane"/>
    <property type="evidence" value="ECO:0000314"/>
    <property type="project" value="WormBase"/>
</dbReference>
<dbReference type="GO" id="GO:0005366">
    <property type="term" value="F:myo-inositol:proton symporter activity"/>
    <property type="evidence" value="ECO:0000318"/>
    <property type="project" value="GO_Central"/>
</dbReference>
<dbReference type="GO" id="GO:0015798">
    <property type="term" value="P:myo-inositol transport"/>
    <property type="evidence" value="ECO:0000318"/>
    <property type="project" value="GO_Central"/>
</dbReference>
<dbReference type="GO" id="GO:0055085">
    <property type="term" value="P:transmembrane transport"/>
    <property type="evidence" value="ECO:0000318"/>
    <property type="project" value="GO_Central"/>
</dbReference>
<dbReference type="CDD" id="cd17360">
    <property type="entry name" value="MFS_HMIT_like"/>
    <property type="match status" value="1"/>
</dbReference>
<dbReference type="FunFam" id="1.20.1250.20:FF:000371">
    <property type="entry name" value="H(+) MyoInositol coTransporter"/>
    <property type="match status" value="1"/>
</dbReference>
<dbReference type="FunFam" id="1.20.1250.20:FF:000387">
    <property type="entry name" value="H(+) MyoInositol coTransporter"/>
    <property type="match status" value="1"/>
</dbReference>
<dbReference type="Gene3D" id="1.20.1250.20">
    <property type="entry name" value="MFS general substrate transporter like domains"/>
    <property type="match status" value="2"/>
</dbReference>
<dbReference type="InterPro" id="IPR020846">
    <property type="entry name" value="MFS_dom"/>
</dbReference>
<dbReference type="InterPro" id="IPR005828">
    <property type="entry name" value="MFS_sugar_transport-like"/>
</dbReference>
<dbReference type="InterPro" id="IPR036259">
    <property type="entry name" value="MFS_trans_sf"/>
</dbReference>
<dbReference type="InterPro" id="IPR050814">
    <property type="entry name" value="Myo-inositol_Transporter"/>
</dbReference>
<dbReference type="InterPro" id="IPR003663">
    <property type="entry name" value="Sugar/inositol_transpt"/>
</dbReference>
<dbReference type="InterPro" id="IPR005829">
    <property type="entry name" value="Sugar_transporter_CS"/>
</dbReference>
<dbReference type="PANTHER" id="PTHR48020">
    <property type="entry name" value="PROTON MYO-INOSITOL COTRANSPORTER"/>
    <property type="match status" value="1"/>
</dbReference>
<dbReference type="PANTHER" id="PTHR48020:SF10">
    <property type="entry name" value="PROTON MYO-INOSITOL COTRANSPORTER HMIT-1.1"/>
    <property type="match status" value="1"/>
</dbReference>
<dbReference type="Pfam" id="PF00083">
    <property type="entry name" value="Sugar_tr"/>
    <property type="match status" value="2"/>
</dbReference>
<dbReference type="PRINTS" id="PR00171">
    <property type="entry name" value="SUGRTRNSPORT"/>
</dbReference>
<dbReference type="SUPFAM" id="SSF103473">
    <property type="entry name" value="MFS general substrate transporter"/>
    <property type="match status" value="1"/>
</dbReference>
<dbReference type="PROSITE" id="PS50850">
    <property type="entry name" value="MFS"/>
    <property type="match status" value="1"/>
</dbReference>
<dbReference type="PROSITE" id="PS00216">
    <property type="entry name" value="SUGAR_TRANSPORT_1"/>
    <property type="match status" value="1"/>
</dbReference>
<dbReference type="PROSITE" id="PS00217">
    <property type="entry name" value="SUGAR_TRANSPORT_2"/>
    <property type="match status" value="1"/>
</dbReference>
<reference evidence="6" key="1">
    <citation type="journal article" date="1998" name="Science">
        <title>Genome sequence of the nematode C. elegans: a platform for investigating biology.</title>
        <authorList>
            <consortium name="The C. elegans sequencing consortium"/>
        </authorList>
    </citation>
    <scope>NUCLEOTIDE SEQUENCE [LARGE SCALE GENOMIC DNA]</scope>
    <source>
        <strain evidence="6">Bristol N2</strain>
    </source>
</reference>
<reference evidence="5" key="2">
    <citation type="journal article" date="2011" name="Biochem. Biophys. Res. Commun.">
        <title>H+/myo-inositol transporter genes, hmit-1.1 and hmit-1.2, have roles in the osmoprotective response in Caenorhabditis elegans.</title>
        <authorList>
            <person name="Kage-Nakadai E."/>
            <person name="Uehara T."/>
            <person name="Mitani S."/>
        </authorList>
    </citation>
    <scope>FUNCTION</scope>
    <scope>SUBCELLULAR LOCATION</scope>
    <scope>TISSUE SPECIFICITY</scope>
    <scope>INDUCTION</scope>
</reference>
<sequence length="606" mass="66658">MVAVAAFSSSGQDKPAHTPKLGLFVYILAAASVIGGFLFGYDTSVVSAAMLYMPDAPGLKPMDTVWQEVLVSISPGMAAVGSLMSGTSSDYIGRRKVILGASAIFTIGALVCAASVNKIMLLVGRVLLGIAIGFASMIVPVYLGETAPTHVRGMLVAAFALMISFGQVVANITGGAFSYIDPYNVGWRLMFAFAAVPSIIQFVCFMFLPETPRWLYENGFETETREVLEKVYNGDKEWVEYEMAEIIAFNEDQAKENEKAHASGPVIWRILKTPHVLKACFIGSMLQAFQQLAGINTILYYTADIIRSSGISNNHTTIWISVLLSLCNFIGPFVPMSLIEKVGRRIIFLFSCGLVVLSLVFIGVAFLLVNHDSAATLPANQYGSNFNSSYPDAKGCMAYSNCDYCVTTDACGFCHDANTKQGYCLPAGFDNPEVYSSTGSCTNSNGSIANNFKWEKYYCDTKYTLLPIIACGVYLLTFSSGFTSLPWVLNSEFYPMWARSTCVAISTTSNWVFNLIIALTYLSLTQVIGKYGAFWLYAGLTVIAFIFILFLVPETKGYSIEEVEMLFMNKKQRREAESRRRETVTEVRSRMNSTVSFGQHNEVHKY</sequence>
<accession>Q9XXR3</accession>
<keyword id="KW-1003">Cell membrane</keyword>
<keyword id="KW-0325">Glycoprotein</keyword>
<keyword id="KW-0472">Membrane</keyword>
<keyword id="KW-1185">Reference proteome</keyword>
<keyword id="KW-0812">Transmembrane</keyword>
<keyword id="KW-1133">Transmembrane helix</keyword>
<keyword id="KW-0813">Transport</keyword>
<protein>
    <recommendedName>
        <fullName evidence="5">Proton myo-inositol cotransporter hmit-1.1</fullName>
        <shortName evidence="7">H(+)-myo-inositol cotransporter hmit-1.1</shortName>
    </recommendedName>
    <alternativeName>
        <fullName evidence="1">H(+)-myo-inositol symporter hmit-1.1</fullName>
    </alternativeName>
</protein>
<comment type="function">
    <text evidence="1 4">H(+)-myo-inositol cotransporter (By similarity). Probably by promoting the transport of myo-inositol regulates intracellular osmosis in response to hyperosmotic stress (PubMed:21679696).</text>
</comment>
<comment type="catalytic activity">
    <reaction evidence="1">
        <text>myo-inositol(out) + H(+)(out) = myo-inositol(in) + H(+)(in)</text>
        <dbReference type="Rhea" id="RHEA:60364"/>
        <dbReference type="ChEBI" id="CHEBI:15378"/>
        <dbReference type="ChEBI" id="CHEBI:17268"/>
    </reaction>
</comment>
<comment type="subcellular location">
    <subcellularLocation>
        <location evidence="4">Cell membrane</location>
        <topology evidence="2">Multi-pass membrane protein</topology>
    </subcellularLocation>
    <text evidence="4">Localizes to the lumenal side of intestinal cells.</text>
</comment>
<comment type="tissue specificity">
    <text evidence="4">Expressed in the intestine.</text>
</comment>
<comment type="induction">
    <text evidence="4">Induced by hyperosmotic stress.</text>
</comment>
<comment type="similarity">
    <text evidence="2">Belongs to the major facilitator superfamily. Sugar transporter (TC 2.A.1.1) family.</text>
</comment>